<gene>
    <name evidence="1" type="primary">nuoB1</name>
    <name type="ordered locus">AnaeK_1276</name>
</gene>
<feature type="chain" id="PRO_0000376120" description="NADH-quinone oxidoreductase subunit B 1">
    <location>
        <begin position="1"/>
        <end position="173"/>
    </location>
</feature>
<feature type="binding site" evidence="1">
    <location>
        <position position="42"/>
    </location>
    <ligand>
        <name>[4Fe-4S] cluster</name>
        <dbReference type="ChEBI" id="CHEBI:49883"/>
    </ligand>
</feature>
<feature type="binding site" evidence="1">
    <location>
        <position position="43"/>
    </location>
    <ligand>
        <name>[4Fe-4S] cluster</name>
        <dbReference type="ChEBI" id="CHEBI:49883"/>
    </ligand>
</feature>
<feature type="binding site" evidence="1">
    <location>
        <position position="107"/>
    </location>
    <ligand>
        <name>[4Fe-4S] cluster</name>
        <dbReference type="ChEBI" id="CHEBI:49883"/>
    </ligand>
</feature>
<feature type="binding site" evidence="1">
    <location>
        <position position="137"/>
    </location>
    <ligand>
        <name>[4Fe-4S] cluster</name>
        <dbReference type="ChEBI" id="CHEBI:49883"/>
    </ligand>
</feature>
<accession>B4UIA4</accession>
<comment type="function">
    <text evidence="1">NDH-1 shuttles electrons from NADH, via FMN and iron-sulfur (Fe-S) centers, to quinones in the respiratory chain. The immediate electron acceptor for the enzyme in this species is believed to be ubiquinone. Couples the redox reaction to proton translocation (for every two electrons transferred, four hydrogen ions are translocated across the cytoplasmic membrane), and thus conserves the redox energy in a proton gradient.</text>
</comment>
<comment type="catalytic activity">
    <reaction evidence="1">
        <text>a quinone + NADH + 5 H(+)(in) = a quinol + NAD(+) + 4 H(+)(out)</text>
        <dbReference type="Rhea" id="RHEA:57888"/>
        <dbReference type="ChEBI" id="CHEBI:15378"/>
        <dbReference type="ChEBI" id="CHEBI:24646"/>
        <dbReference type="ChEBI" id="CHEBI:57540"/>
        <dbReference type="ChEBI" id="CHEBI:57945"/>
        <dbReference type="ChEBI" id="CHEBI:132124"/>
    </reaction>
</comment>
<comment type="cofactor">
    <cofactor evidence="1">
        <name>[4Fe-4S] cluster</name>
        <dbReference type="ChEBI" id="CHEBI:49883"/>
    </cofactor>
    <text evidence="1">Binds 1 [4Fe-4S] cluster.</text>
</comment>
<comment type="subunit">
    <text evidence="1">NDH-1 is composed of 14 different subunits. Subunits NuoB, C, D, E, F, and G constitute the peripheral sector of the complex.</text>
</comment>
<comment type="subcellular location">
    <subcellularLocation>
        <location evidence="1">Cell inner membrane</location>
        <topology evidence="1">Peripheral membrane protein</topology>
        <orientation evidence="1">Cytoplasmic side</orientation>
    </subcellularLocation>
</comment>
<comment type="similarity">
    <text evidence="1">Belongs to the complex I 20 kDa subunit family.</text>
</comment>
<evidence type="ECO:0000255" key="1">
    <source>
        <dbReference type="HAMAP-Rule" id="MF_01356"/>
    </source>
</evidence>
<reference key="1">
    <citation type="submission" date="2008-08" db="EMBL/GenBank/DDBJ databases">
        <title>Complete sequence of Anaeromyxobacter sp. K.</title>
        <authorList>
            <consortium name="US DOE Joint Genome Institute"/>
            <person name="Lucas S."/>
            <person name="Copeland A."/>
            <person name="Lapidus A."/>
            <person name="Glavina del Rio T."/>
            <person name="Dalin E."/>
            <person name="Tice H."/>
            <person name="Bruce D."/>
            <person name="Goodwin L."/>
            <person name="Pitluck S."/>
            <person name="Saunders E."/>
            <person name="Brettin T."/>
            <person name="Detter J.C."/>
            <person name="Han C."/>
            <person name="Larimer F."/>
            <person name="Land M."/>
            <person name="Hauser L."/>
            <person name="Kyrpides N."/>
            <person name="Ovchinnikiva G."/>
            <person name="Beliaev A."/>
        </authorList>
    </citation>
    <scope>NUCLEOTIDE SEQUENCE [LARGE SCALE GENOMIC DNA]</scope>
    <source>
        <strain>K</strain>
    </source>
</reference>
<organism>
    <name type="scientific">Anaeromyxobacter sp. (strain K)</name>
    <dbReference type="NCBI Taxonomy" id="447217"/>
    <lineage>
        <taxon>Bacteria</taxon>
        <taxon>Pseudomonadati</taxon>
        <taxon>Myxococcota</taxon>
        <taxon>Myxococcia</taxon>
        <taxon>Myxococcales</taxon>
        <taxon>Cystobacterineae</taxon>
        <taxon>Anaeromyxobacteraceae</taxon>
        <taxon>Anaeromyxobacter</taxon>
    </lineage>
</organism>
<keyword id="KW-0004">4Fe-4S</keyword>
<keyword id="KW-0997">Cell inner membrane</keyword>
<keyword id="KW-1003">Cell membrane</keyword>
<keyword id="KW-0408">Iron</keyword>
<keyword id="KW-0411">Iron-sulfur</keyword>
<keyword id="KW-0472">Membrane</keyword>
<keyword id="KW-0479">Metal-binding</keyword>
<keyword id="KW-0520">NAD</keyword>
<keyword id="KW-0874">Quinone</keyword>
<keyword id="KW-1278">Translocase</keyword>
<keyword id="KW-0813">Transport</keyword>
<keyword id="KW-0830">Ubiquinone</keyword>
<proteinExistence type="inferred from homology"/>
<protein>
    <recommendedName>
        <fullName evidence="1">NADH-quinone oxidoreductase subunit B 1</fullName>
        <ecNumber evidence="1">7.1.1.-</ecNumber>
    </recommendedName>
    <alternativeName>
        <fullName evidence="1">NADH dehydrogenase I subunit B 1</fullName>
    </alternativeName>
    <alternativeName>
        <fullName evidence="1">NDH-1 subunit B 1</fullName>
    </alternativeName>
</protein>
<name>NUOB1_ANASK</name>
<dbReference type="EC" id="7.1.1.-" evidence="1"/>
<dbReference type="EMBL" id="CP001131">
    <property type="protein sequence ID" value="ACG72509.1"/>
    <property type="molecule type" value="Genomic_DNA"/>
</dbReference>
<dbReference type="RefSeq" id="WP_012525333.1">
    <property type="nucleotide sequence ID" value="NC_011145.1"/>
</dbReference>
<dbReference type="SMR" id="B4UIA4"/>
<dbReference type="KEGG" id="ank:AnaeK_1276"/>
<dbReference type="HOGENOM" id="CLU_055737_7_3_7"/>
<dbReference type="OrthoDB" id="9786737at2"/>
<dbReference type="Proteomes" id="UP000001871">
    <property type="component" value="Chromosome"/>
</dbReference>
<dbReference type="GO" id="GO:0005886">
    <property type="term" value="C:plasma membrane"/>
    <property type="evidence" value="ECO:0007669"/>
    <property type="project" value="UniProtKB-SubCell"/>
</dbReference>
<dbReference type="GO" id="GO:0045271">
    <property type="term" value="C:respiratory chain complex I"/>
    <property type="evidence" value="ECO:0007669"/>
    <property type="project" value="TreeGrafter"/>
</dbReference>
<dbReference type="GO" id="GO:0051539">
    <property type="term" value="F:4 iron, 4 sulfur cluster binding"/>
    <property type="evidence" value="ECO:0007669"/>
    <property type="project" value="UniProtKB-KW"/>
</dbReference>
<dbReference type="GO" id="GO:0005506">
    <property type="term" value="F:iron ion binding"/>
    <property type="evidence" value="ECO:0007669"/>
    <property type="project" value="UniProtKB-UniRule"/>
</dbReference>
<dbReference type="GO" id="GO:0008137">
    <property type="term" value="F:NADH dehydrogenase (ubiquinone) activity"/>
    <property type="evidence" value="ECO:0007669"/>
    <property type="project" value="InterPro"/>
</dbReference>
<dbReference type="GO" id="GO:0050136">
    <property type="term" value="F:NADH:ubiquinone reductase (non-electrogenic) activity"/>
    <property type="evidence" value="ECO:0007669"/>
    <property type="project" value="UniProtKB-UniRule"/>
</dbReference>
<dbReference type="GO" id="GO:0048038">
    <property type="term" value="F:quinone binding"/>
    <property type="evidence" value="ECO:0007669"/>
    <property type="project" value="UniProtKB-KW"/>
</dbReference>
<dbReference type="GO" id="GO:0009060">
    <property type="term" value="P:aerobic respiration"/>
    <property type="evidence" value="ECO:0007669"/>
    <property type="project" value="TreeGrafter"/>
</dbReference>
<dbReference type="GO" id="GO:0015990">
    <property type="term" value="P:electron transport coupled proton transport"/>
    <property type="evidence" value="ECO:0007669"/>
    <property type="project" value="TreeGrafter"/>
</dbReference>
<dbReference type="FunFam" id="3.40.50.12280:FF:000002">
    <property type="entry name" value="NADH-quinone oxidoreductase subunit B"/>
    <property type="match status" value="1"/>
</dbReference>
<dbReference type="Gene3D" id="3.40.50.12280">
    <property type="match status" value="1"/>
</dbReference>
<dbReference type="HAMAP" id="MF_01356">
    <property type="entry name" value="NDH1_NuoB"/>
    <property type="match status" value="1"/>
</dbReference>
<dbReference type="InterPro" id="IPR006137">
    <property type="entry name" value="NADH_UbQ_OxRdtase-like_20kDa"/>
</dbReference>
<dbReference type="InterPro" id="IPR006138">
    <property type="entry name" value="NADH_UQ_OxRdtase_20Kd_su"/>
</dbReference>
<dbReference type="NCBIfam" id="TIGR01957">
    <property type="entry name" value="nuoB_fam"/>
    <property type="match status" value="1"/>
</dbReference>
<dbReference type="NCBIfam" id="NF005012">
    <property type="entry name" value="PRK06411.1"/>
    <property type="match status" value="1"/>
</dbReference>
<dbReference type="NCBIfam" id="NF011393">
    <property type="entry name" value="PRK14818.1"/>
    <property type="match status" value="1"/>
</dbReference>
<dbReference type="PANTHER" id="PTHR11995">
    <property type="entry name" value="NADH DEHYDROGENASE"/>
    <property type="match status" value="1"/>
</dbReference>
<dbReference type="PANTHER" id="PTHR11995:SF14">
    <property type="entry name" value="NADH DEHYDROGENASE [UBIQUINONE] IRON-SULFUR PROTEIN 7, MITOCHONDRIAL"/>
    <property type="match status" value="1"/>
</dbReference>
<dbReference type="Pfam" id="PF01058">
    <property type="entry name" value="Oxidored_q6"/>
    <property type="match status" value="1"/>
</dbReference>
<dbReference type="SUPFAM" id="SSF56770">
    <property type="entry name" value="HydA/Nqo6-like"/>
    <property type="match status" value="1"/>
</dbReference>
<dbReference type="PROSITE" id="PS01150">
    <property type="entry name" value="COMPLEX1_20K"/>
    <property type="match status" value="1"/>
</dbReference>
<sequence length="173" mass="18758">MAARMDPGIGGDVTLLHTSQLDNLINLARASSLYYLTFGLACCGIELMQTGGPRADVMRFGAIPRASPRQADFMIVAGTLTYKMAERARLLYDQMPEPKYVISMGSCSNCGGLFQLGYSVCKGVDKVIPVDVYVPGCPPRPEALTEGLLRLQEIVRSEPWSTKRRPAAQAEGA</sequence>